<sequence length="113" mass="12215">MHEMSLAVAAIDLAAEQATQRGFNKVTALWLEVGSFSCVDPDTIAFCFEAAAKGTVVEGAQLHFQHQAAEAWCYDCDKTVTLTERGQACPECGGYKLRVAQGDSLRITDIEVS</sequence>
<name>HYPA_AERS4</name>
<comment type="function">
    <text evidence="1">Involved in the maturation of [NiFe] hydrogenases. Required for nickel insertion into the metal center of the hydrogenase.</text>
</comment>
<comment type="similarity">
    <text evidence="1">Belongs to the HypA/HybF family.</text>
</comment>
<protein>
    <recommendedName>
        <fullName evidence="1">Hydrogenase maturation factor HypA</fullName>
    </recommendedName>
</protein>
<keyword id="KW-0479">Metal-binding</keyword>
<keyword id="KW-0533">Nickel</keyword>
<keyword id="KW-0862">Zinc</keyword>
<gene>
    <name evidence="1" type="primary">hypA</name>
    <name type="ordered locus">ASA_1800</name>
</gene>
<feature type="chain" id="PRO_1000023819" description="Hydrogenase maturation factor HypA">
    <location>
        <begin position="1"/>
        <end position="113"/>
    </location>
</feature>
<feature type="binding site" evidence="1">
    <location>
        <position position="2"/>
    </location>
    <ligand>
        <name>Ni(2+)</name>
        <dbReference type="ChEBI" id="CHEBI:49786"/>
    </ligand>
</feature>
<feature type="binding site" evidence="1">
    <location>
        <position position="73"/>
    </location>
    <ligand>
        <name>Zn(2+)</name>
        <dbReference type="ChEBI" id="CHEBI:29105"/>
    </ligand>
</feature>
<feature type="binding site" evidence="1">
    <location>
        <position position="76"/>
    </location>
    <ligand>
        <name>Zn(2+)</name>
        <dbReference type="ChEBI" id="CHEBI:29105"/>
    </ligand>
</feature>
<feature type="binding site" evidence="1">
    <location>
        <position position="89"/>
    </location>
    <ligand>
        <name>Zn(2+)</name>
        <dbReference type="ChEBI" id="CHEBI:29105"/>
    </ligand>
</feature>
<feature type="binding site" evidence="1">
    <location>
        <position position="92"/>
    </location>
    <ligand>
        <name>Zn(2+)</name>
        <dbReference type="ChEBI" id="CHEBI:29105"/>
    </ligand>
</feature>
<organism>
    <name type="scientific">Aeromonas salmonicida (strain A449)</name>
    <dbReference type="NCBI Taxonomy" id="382245"/>
    <lineage>
        <taxon>Bacteria</taxon>
        <taxon>Pseudomonadati</taxon>
        <taxon>Pseudomonadota</taxon>
        <taxon>Gammaproteobacteria</taxon>
        <taxon>Aeromonadales</taxon>
        <taxon>Aeromonadaceae</taxon>
        <taxon>Aeromonas</taxon>
    </lineage>
</organism>
<proteinExistence type="inferred from homology"/>
<dbReference type="EMBL" id="CP000644">
    <property type="protein sequence ID" value="ABO89878.1"/>
    <property type="molecule type" value="Genomic_DNA"/>
</dbReference>
<dbReference type="RefSeq" id="WP_005315136.1">
    <property type="nucleotide sequence ID" value="NC_009348.1"/>
</dbReference>
<dbReference type="SMR" id="A4SLV6"/>
<dbReference type="STRING" id="29491.GCA_000820065_03065"/>
<dbReference type="KEGG" id="asa:ASA_1800"/>
<dbReference type="eggNOG" id="COG0375">
    <property type="taxonomic scope" value="Bacteria"/>
</dbReference>
<dbReference type="HOGENOM" id="CLU_126929_0_0_6"/>
<dbReference type="Proteomes" id="UP000000225">
    <property type="component" value="Chromosome"/>
</dbReference>
<dbReference type="GO" id="GO:0016151">
    <property type="term" value="F:nickel cation binding"/>
    <property type="evidence" value="ECO:0007669"/>
    <property type="project" value="UniProtKB-UniRule"/>
</dbReference>
<dbReference type="GO" id="GO:0008270">
    <property type="term" value="F:zinc ion binding"/>
    <property type="evidence" value="ECO:0007669"/>
    <property type="project" value="UniProtKB-UniRule"/>
</dbReference>
<dbReference type="GO" id="GO:0051604">
    <property type="term" value="P:protein maturation"/>
    <property type="evidence" value="ECO:0007669"/>
    <property type="project" value="InterPro"/>
</dbReference>
<dbReference type="GO" id="GO:0036211">
    <property type="term" value="P:protein modification process"/>
    <property type="evidence" value="ECO:0007669"/>
    <property type="project" value="UniProtKB-UniRule"/>
</dbReference>
<dbReference type="FunFam" id="3.30.2320.80:FF:000001">
    <property type="entry name" value="Hydrogenase maturation factor HypA"/>
    <property type="match status" value="1"/>
</dbReference>
<dbReference type="Gene3D" id="3.30.2320.80">
    <property type="match status" value="1"/>
</dbReference>
<dbReference type="HAMAP" id="MF_00213">
    <property type="entry name" value="HypA_HybF"/>
    <property type="match status" value="1"/>
</dbReference>
<dbReference type="InterPro" id="IPR020538">
    <property type="entry name" value="Hydgase_Ni_incorp_HypA/HybF_CS"/>
</dbReference>
<dbReference type="InterPro" id="IPR000688">
    <property type="entry name" value="HypA/HybF"/>
</dbReference>
<dbReference type="NCBIfam" id="TIGR00100">
    <property type="entry name" value="hypA"/>
    <property type="match status" value="1"/>
</dbReference>
<dbReference type="NCBIfam" id="NF009046">
    <property type="entry name" value="PRK12380.1"/>
    <property type="match status" value="1"/>
</dbReference>
<dbReference type="PANTHER" id="PTHR34535">
    <property type="entry name" value="HYDROGENASE MATURATION FACTOR HYPA"/>
    <property type="match status" value="1"/>
</dbReference>
<dbReference type="PANTHER" id="PTHR34535:SF3">
    <property type="entry name" value="HYDROGENASE MATURATION FACTOR HYPA"/>
    <property type="match status" value="1"/>
</dbReference>
<dbReference type="Pfam" id="PF01155">
    <property type="entry name" value="HypA"/>
    <property type="match status" value="1"/>
</dbReference>
<dbReference type="PIRSF" id="PIRSF004761">
    <property type="entry name" value="Hydrgn_mat_HypA"/>
    <property type="match status" value="1"/>
</dbReference>
<dbReference type="PROSITE" id="PS01249">
    <property type="entry name" value="HYPA"/>
    <property type="match status" value="1"/>
</dbReference>
<accession>A4SLV6</accession>
<evidence type="ECO:0000255" key="1">
    <source>
        <dbReference type="HAMAP-Rule" id="MF_00213"/>
    </source>
</evidence>
<reference key="1">
    <citation type="journal article" date="2008" name="BMC Genomics">
        <title>The genome of Aeromonas salmonicida subsp. salmonicida A449: insights into the evolution of a fish pathogen.</title>
        <authorList>
            <person name="Reith M.E."/>
            <person name="Singh R.K."/>
            <person name="Curtis B."/>
            <person name="Boyd J.M."/>
            <person name="Bouevitch A."/>
            <person name="Kimball J."/>
            <person name="Munholland J."/>
            <person name="Murphy C."/>
            <person name="Sarty D."/>
            <person name="Williams J."/>
            <person name="Nash J.H."/>
            <person name="Johnson S.C."/>
            <person name="Brown L.L."/>
        </authorList>
    </citation>
    <scope>NUCLEOTIDE SEQUENCE [LARGE SCALE GENOMIC DNA]</scope>
    <source>
        <strain>A449</strain>
    </source>
</reference>